<keyword id="KW-1003">Cell membrane</keyword>
<keyword id="KW-0472">Membrane</keyword>
<keyword id="KW-1185">Reference proteome</keyword>
<keyword id="KW-0812">Transmembrane</keyword>
<keyword id="KW-1133">Transmembrane helix</keyword>
<keyword id="KW-0813">Transport</keyword>
<protein>
    <recommendedName>
        <fullName>Uncharacterized ABC transporter permease YvrN</fullName>
    </recommendedName>
</protein>
<dbReference type="EMBL" id="AJ223978">
    <property type="protein sequence ID" value="CAA11725.1"/>
    <property type="status" value="ALT_INIT"/>
    <property type="molecule type" value="Genomic_DNA"/>
</dbReference>
<dbReference type="EMBL" id="AL009126">
    <property type="protein sequence ID" value="CAB15317.3"/>
    <property type="molecule type" value="Genomic_DNA"/>
</dbReference>
<dbReference type="EMBL" id="M22903">
    <property type="protein sequence ID" value="AAA22819.1"/>
    <property type="molecule type" value="Genomic_DNA"/>
</dbReference>
<dbReference type="PIR" id="H70047">
    <property type="entry name" value="H70047"/>
</dbReference>
<dbReference type="RefSeq" id="NP_391207.3">
    <property type="nucleotide sequence ID" value="NC_000964.3"/>
</dbReference>
<dbReference type="RefSeq" id="WP_003244568.1">
    <property type="nucleotide sequence ID" value="NZ_OZ025638.1"/>
</dbReference>
<dbReference type="SMR" id="P46324"/>
<dbReference type="FunCoup" id="P46324">
    <property type="interactions" value="246"/>
</dbReference>
<dbReference type="STRING" id="224308.BSU33260"/>
<dbReference type="PaxDb" id="224308-BSU33260"/>
<dbReference type="EnsemblBacteria" id="CAB15317">
    <property type="protein sequence ID" value="CAB15317"/>
    <property type="gene ID" value="BSU_33260"/>
</dbReference>
<dbReference type="GeneID" id="937213"/>
<dbReference type="KEGG" id="bsu:BSU33260"/>
<dbReference type="PATRIC" id="fig|224308.179.peg.3610"/>
<dbReference type="eggNOG" id="COG0577">
    <property type="taxonomic scope" value="Bacteria"/>
</dbReference>
<dbReference type="InParanoid" id="P46324"/>
<dbReference type="OrthoDB" id="9770036at2"/>
<dbReference type="PhylomeDB" id="P46324"/>
<dbReference type="BioCyc" id="BSUB:BSU33260-MONOMER"/>
<dbReference type="Proteomes" id="UP000001570">
    <property type="component" value="Chromosome"/>
</dbReference>
<dbReference type="GO" id="GO:0005886">
    <property type="term" value="C:plasma membrane"/>
    <property type="evidence" value="ECO:0000318"/>
    <property type="project" value="GO_Central"/>
</dbReference>
<dbReference type="GO" id="GO:0022857">
    <property type="term" value="F:transmembrane transporter activity"/>
    <property type="evidence" value="ECO:0000318"/>
    <property type="project" value="GO_Central"/>
</dbReference>
<dbReference type="InterPro" id="IPR003838">
    <property type="entry name" value="ABC3_permease_C"/>
</dbReference>
<dbReference type="InterPro" id="IPR025857">
    <property type="entry name" value="MacB_PCD"/>
</dbReference>
<dbReference type="InterPro" id="IPR050250">
    <property type="entry name" value="Macrolide_Exporter_MacB"/>
</dbReference>
<dbReference type="PANTHER" id="PTHR30572:SF4">
    <property type="entry name" value="ABC TRANSPORTER PERMEASE YTRF"/>
    <property type="match status" value="1"/>
</dbReference>
<dbReference type="PANTHER" id="PTHR30572">
    <property type="entry name" value="MEMBRANE COMPONENT OF TRANSPORTER-RELATED"/>
    <property type="match status" value="1"/>
</dbReference>
<dbReference type="Pfam" id="PF02687">
    <property type="entry name" value="FtsX"/>
    <property type="match status" value="1"/>
</dbReference>
<dbReference type="Pfam" id="PF12704">
    <property type="entry name" value="MacB_PCD"/>
    <property type="match status" value="1"/>
</dbReference>
<sequence length="409" mass="44344">MLEHIRISFQSIFSHKLRSILTMLGVIIGIAAIIAIVSMLKGQSEQLKQSMIGMGNNAINVVYQPSGGEEESGGPQVSYASAPPVAEETVKAIKSDPMVKGLSLYYLSEGASVFHLTNVSYPQVYGVDDDYFDMFPIRITEGRKLTENDLNSTHQVVMINEAVRDELFPDGEALHKSIEMNGVPFKVVGVFKEKNQQESMFEGDYANPVLYVPKKVWPLIEGFDAPTQIAVQADSSEHIQEAGVMAADLLNQGLSEAELEKAEYSVMDLQEIAQEVESFNQSFALLLGGIASISLLVGGIGVMNIMLVSVTERTREIGIKKALGAKRRVILFQFLTEAVVLTSIGGILGVLAGFGIAKLLTVIFPMPFIVSIPAVVGALIFSMAVGIIFGLLPSIKASKLQPVDALRYE</sequence>
<name>YVRN_BACSU</name>
<evidence type="ECO:0000255" key="1"/>
<evidence type="ECO:0000305" key="2"/>
<reference key="1">
    <citation type="submission" date="1995-10" db="EMBL/GenBank/DDBJ databases">
        <title>Sequencing and analysis of the region of the Bacillus subtilis chromosome between yvsA and yvqA (293 degrees -289 degress) containing genes involved in metal ion uptake and a putative sigma factor.</title>
        <authorList>
            <person name="Wipat A."/>
            <person name="Brignell C.S."/>
            <person name="Guy J.B."/>
            <person name="Rose M."/>
            <person name="Emmerson P.T."/>
            <person name="Harwood C.R."/>
        </authorList>
    </citation>
    <scope>NUCLEOTIDE SEQUENCE [GENOMIC DNA]</scope>
    <source>
        <strain>168</strain>
    </source>
</reference>
<reference key="2">
    <citation type="journal article" date="1997" name="Nature">
        <title>The complete genome sequence of the Gram-positive bacterium Bacillus subtilis.</title>
        <authorList>
            <person name="Kunst F."/>
            <person name="Ogasawara N."/>
            <person name="Moszer I."/>
            <person name="Albertini A.M."/>
            <person name="Alloni G."/>
            <person name="Azevedo V."/>
            <person name="Bertero M.G."/>
            <person name="Bessieres P."/>
            <person name="Bolotin A."/>
            <person name="Borchert S."/>
            <person name="Borriss R."/>
            <person name="Boursier L."/>
            <person name="Brans A."/>
            <person name="Braun M."/>
            <person name="Brignell S.C."/>
            <person name="Bron S."/>
            <person name="Brouillet S."/>
            <person name="Bruschi C.V."/>
            <person name="Caldwell B."/>
            <person name="Capuano V."/>
            <person name="Carter N.M."/>
            <person name="Choi S.-K."/>
            <person name="Codani J.-J."/>
            <person name="Connerton I.F."/>
            <person name="Cummings N.J."/>
            <person name="Daniel R.A."/>
            <person name="Denizot F."/>
            <person name="Devine K.M."/>
            <person name="Duesterhoeft A."/>
            <person name="Ehrlich S.D."/>
            <person name="Emmerson P.T."/>
            <person name="Entian K.-D."/>
            <person name="Errington J."/>
            <person name="Fabret C."/>
            <person name="Ferrari E."/>
            <person name="Foulger D."/>
            <person name="Fritz C."/>
            <person name="Fujita M."/>
            <person name="Fujita Y."/>
            <person name="Fuma S."/>
            <person name="Galizzi A."/>
            <person name="Galleron N."/>
            <person name="Ghim S.-Y."/>
            <person name="Glaser P."/>
            <person name="Goffeau A."/>
            <person name="Golightly E.J."/>
            <person name="Grandi G."/>
            <person name="Guiseppi G."/>
            <person name="Guy B.J."/>
            <person name="Haga K."/>
            <person name="Haiech J."/>
            <person name="Harwood C.R."/>
            <person name="Henaut A."/>
            <person name="Hilbert H."/>
            <person name="Holsappel S."/>
            <person name="Hosono S."/>
            <person name="Hullo M.-F."/>
            <person name="Itaya M."/>
            <person name="Jones L.-M."/>
            <person name="Joris B."/>
            <person name="Karamata D."/>
            <person name="Kasahara Y."/>
            <person name="Klaerr-Blanchard M."/>
            <person name="Klein C."/>
            <person name="Kobayashi Y."/>
            <person name="Koetter P."/>
            <person name="Koningstein G."/>
            <person name="Krogh S."/>
            <person name="Kumano M."/>
            <person name="Kurita K."/>
            <person name="Lapidus A."/>
            <person name="Lardinois S."/>
            <person name="Lauber J."/>
            <person name="Lazarevic V."/>
            <person name="Lee S.-M."/>
            <person name="Levine A."/>
            <person name="Liu H."/>
            <person name="Masuda S."/>
            <person name="Mauel C."/>
            <person name="Medigue C."/>
            <person name="Medina N."/>
            <person name="Mellado R.P."/>
            <person name="Mizuno M."/>
            <person name="Moestl D."/>
            <person name="Nakai S."/>
            <person name="Noback M."/>
            <person name="Noone D."/>
            <person name="O'Reilly M."/>
            <person name="Ogawa K."/>
            <person name="Ogiwara A."/>
            <person name="Oudega B."/>
            <person name="Park S.-H."/>
            <person name="Parro V."/>
            <person name="Pohl T.M."/>
            <person name="Portetelle D."/>
            <person name="Porwollik S."/>
            <person name="Prescott A.M."/>
            <person name="Presecan E."/>
            <person name="Pujic P."/>
            <person name="Purnelle B."/>
            <person name="Rapoport G."/>
            <person name="Rey M."/>
            <person name="Reynolds S."/>
            <person name="Rieger M."/>
            <person name="Rivolta C."/>
            <person name="Rocha E."/>
            <person name="Roche B."/>
            <person name="Rose M."/>
            <person name="Sadaie Y."/>
            <person name="Sato T."/>
            <person name="Scanlan E."/>
            <person name="Schleich S."/>
            <person name="Schroeter R."/>
            <person name="Scoffone F."/>
            <person name="Sekiguchi J."/>
            <person name="Sekowska A."/>
            <person name="Seror S.J."/>
            <person name="Serror P."/>
            <person name="Shin B.-S."/>
            <person name="Soldo B."/>
            <person name="Sorokin A."/>
            <person name="Tacconi E."/>
            <person name="Takagi T."/>
            <person name="Takahashi H."/>
            <person name="Takemaru K."/>
            <person name="Takeuchi M."/>
            <person name="Tamakoshi A."/>
            <person name="Tanaka T."/>
            <person name="Terpstra P."/>
            <person name="Tognoni A."/>
            <person name="Tosato V."/>
            <person name="Uchiyama S."/>
            <person name="Vandenbol M."/>
            <person name="Vannier F."/>
            <person name="Vassarotti A."/>
            <person name="Viari A."/>
            <person name="Wambutt R."/>
            <person name="Wedler E."/>
            <person name="Wedler H."/>
            <person name="Weitzenegger T."/>
            <person name="Winters P."/>
            <person name="Wipat A."/>
            <person name="Yamamoto H."/>
            <person name="Yamane K."/>
            <person name="Yasumoto K."/>
            <person name="Yata K."/>
            <person name="Yoshida K."/>
            <person name="Yoshikawa H.-F."/>
            <person name="Zumstein E."/>
            <person name="Yoshikawa H."/>
            <person name="Danchin A."/>
        </authorList>
    </citation>
    <scope>NUCLEOTIDE SEQUENCE [LARGE SCALE GENOMIC DNA]</scope>
    <source>
        <strain>168</strain>
    </source>
</reference>
<reference key="3">
    <citation type="journal article" date="1999" name="Genome Res.">
        <title>Detecting and analyzing DNA sequencing errors: toward a higher quality of the Bacillus subtilis genome sequence.</title>
        <authorList>
            <person name="Medigue C."/>
            <person name="Rose M."/>
            <person name="Viari A."/>
            <person name="Danchin A."/>
        </authorList>
    </citation>
    <scope>SEQUENCE REVISION</scope>
</reference>
<reference key="4">
    <citation type="journal article" date="2009" name="Microbiology">
        <title>From a consortium sequence to a unified sequence: the Bacillus subtilis 168 reference genome a decade later.</title>
        <authorList>
            <person name="Barbe V."/>
            <person name="Cruveiller S."/>
            <person name="Kunst F."/>
            <person name="Lenoble P."/>
            <person name="Meurice G."/>
            <person name="Sekowska A."/>
            <person name="Vallenet D."/>
            <person name="Wang T."/>
            <person name="Moszer I."/>
            <person name="Medigue C."/>
            <person name="Danchin A."/>
        </authorList>
    </citation>
    <scope>SEQUENCE REVISION TO 276-277</scope>
</reference>
<reference key="5">
    <citation type="journal article" date="1988" name="Gene">
        <title>Characterization of signal-sequence-coding regions selected from the Bacillus subtilis chromosome.</title>
        <authorList>
            <person name="Smith H."/>
            <person name="de Jong A."/>
            <person name="Bron S."/>
            <person name="Venema G."/>
        </authorList>
    </citation>
    <scope>NUCLEOTIDE SEQUENCE [GENOMIC DNA] OF 1-221</scope>
</reference>
<accession>P46324</accession>
<accession>O34998</accession>
<accession>O52858</accession>
<gene>
    <name type="primary">yvrN</name>
    <name type="synonym">yvrM</name>
    <name type="synonym">yziB</name>
    <name type="ordered locus">BSU33260</name>
</gene>
<organism>
    <name type="scientific">Bacillus subtilis (strain 168)</name>
    <dbReference type="NCBI Taxonomy" id="224308"/>
    <lineage>
        <taxon>Bacteria</taxon>
        <taxon>Bacillati</taxon>
        <taxon>Bacillota</taxon>
        <taxon>Bacilli</taxon>
        <taxon>Bacillales</taxon>
        <taxon>Bacillaceae</taxon>
        <taxon>Bacillus</taxon>
    </lineage>
</organism>
<proteinExistence type="inferred from homology"/>
<comment type="subcellular location">
    <subcellularLocation>
        <location evidence="2">Cell membrane</location>
        <topology evidence="2">Multi-pass membrane protein</topology>
    </subcellularLocation>
</comment>
<comment type="similarity">
    <text evidence="2">Belongs to the ABC-4 integral membrane protein family.</text>
</comment>
<comment type="sequence caution" evidence="2">
    <conflict type="erroneous initiation">
        <sequence resource="EMBL-CDS" id="CAA11725"/>
    </conflict>
</comment>
<feature type="chain" id="PRO_0000049945" description="Uncharacterized ABC transporter permease YvrN">
    <location>
        <begin position="1"/>
        <end position="409"/>
    </location>
</feature>
<feature type="transmembrane region" description="Helical" evidence="1">
    <location>
        <begin position="20"/>
        <end position="40"/>
    </location>
</feature>
<feature type="transmembrane region" description="Helical" evidence="1">
    <location>
        <begin position="283"/>
        <end position="303"/>
    </location>
</feature>
<feature type="transmembrane region" description="Helical" evidence="1">
    <location>
        <begin position="344"/>
        <end position="364"/>
    </location>
</feature>
<feature type="transmembrane region" description="Helical" evidence="1">
    <location>
        <begin position="372"/>
        <end position="392"/>
    </location>
</feature>
<feature type="sequence conflict" description="In Ref. 5; AAA22819." evidence="2" ref="5">
    <original>Q</original>
    <variation>K</variation>
    <location>
        <position position="49"/>
    </location>
</feature>
<feature type="sequence conflict" description="In Ref. 5; AAA22819." evidence="2" ref="5">
    <original>L</original>
    <variation>V</variation>
    <location>
        <position position="107"/>
    </location>
</feature>
<feature type="sequence conflict" description="In Ref. 5; AAA22819." evidence="2" ref="5">
    <original>N</original>
    <variation>D</variation>
    <location>
        <position position="207"/>
    </location>
</feature>
<feature type="sequence conflict" description="In Ref. 5; AAA22819." evidence="2" ref="5">
    <original>YVPKKVWPLIE</original>
    <variation>GDPLESTAAAA</variation>
    <location>
        <begin position="211"/>
        <end position="221"/>
    </location>
</feature>
<feature type="sequence conflict" description="In Ref. 1; CAA11725." evidence="2" ref="1">
    <original>VE</original>
    <variation>LH</variation>
    <location>
        <begin position="276"/>
        <end position="277"/>
    </location>
</feature>